<protein>
    <recommendedName>
        <fullName evidence="1">Protein TK0174</fullName>
    </recommendedName>
</protein>
<dbReference type="EMBL" id="AP006878">
    <property type="protein sequence ID" value="BAD84363.1"/>
    <property type="molecule type" value="Genomic_DNA"/>
</dbReference>
<dbReference type="RefSeq" id="WP_011249129.1">
    <property type="nucleotide sequence ID" value="NC_006624.1"/>
</dbReference>
<dbReference type="SMR" id="Q5JFK7"/>
<dbReference type="FunCoup" id="Q5JFK7">
    <property type="interactions" value="77"/>
</dbReference>
<dbReference type="STRING" id="69014.TK0174"/>
<dbReference type="EnsemblBacteria" id="BAD84363">
    <property type="protein sequence ID" value="BAD84363"/>
    <property type="gene ID" value="TK0174"/>
</dbReference>
<dbReference type="GeneID" id="78446678"/>
<dbReference type="KEGG" id="tko:TK0174"/>
<dbReference type="PATRIC" id="fig|69014.16.peg.174"/>
<dbReference type="eggNOG" id="arCOG01336">
    <property type="taxonomic scope" value="Archaea"/>
</dbReference>
<dbReference type="HOGENOM" id="CLU_095686_1_1_2"/>
<dbReference type="InParanoid" id="Q5JFK7"/>
<dbReference type="OrthoDB" id="25187at2157"/>
<dbReference type="PhylomeDB" id="Q5JFK7"/>
<dbReference type="Proteomes" id="UP000000536">
    <property type="component" value="Chromosome"/>
</dbReference>
<dbReference type="Gene3D" id="3.30.700.20">
    <property type="entry name" value="Hypothetical protein ph0010, domain 1"/>
    <property type="match status" value="1"/>
</dbReference>
<dbReference type="Gene3D" id="3.30.1490.150">
    <property type="entry name" value="Hypothetical protein ph0010, domain 2"/>
    <property type="match status" value="1"/>
</dbReference>
<dbReference type="HAMAP" id="MF_00645">
    <property type="entry name" value="AMMECR1"/>
    <property type="match status" value="1"/>
</dbReference>
<dbReference type="InterPro" id="IPR023473">
    <property type="entry name" value="AMMECR1"/>
</dbReference>
<dbReference type="InterPro" id="IPR036071">
    <property type="entry name" value="AMMECR1_dom_sf"/>
</dbReference>
<dbReference type="InterPro" id="IPR002733">
    <property type="entry name" value="AMMECR1_domain"/>
</dbReference>
<dbReference type="InterPro" id="IPR027485">
    <property type="entry name" value="AMMECR1_N"/>
</dbReference>
<dbReference type="InterPro" id="IPR027623">
    <property type="entry name" value="AmmeMemoSam_A"/>
</dbReference>
<dbReference type="InterPro" id="IPR023472">
    <property type="entry name" value="Uncharacterised_MJ0810"/>
</dbReference>
<dbReference type="NCBIfam" id="TIGR04335">
    <property type="entry name" value="AmmeMemoSam_A"/>
    <property type="match status" value="1"/>
</dbReference>
<dbReference type="NCBIfam" id="NF002000">
    <property type="entry name" value="PRK00801.1"/>
    <property type="match status" value="1"/>
</dbReference>
<dbReference type="NCBIfam" id="TIGR00296">
    <property type="entry name" value="TIGR00296 family protein"/>
    <property type="match status" value="1"/>
</dbReference>
<dbReference type="PANTHER" id="PTHR13016:SF0">
    <property type="entry name" value="AMME SYNDROME CANDIDATE GENE 1 PROTEIN"/>
    <property type="match status" value="1"/>
</dbReference>
<dbReference type="PANTHER" id="PTHR13016">
    <property type="entry name" value="AMMECR1 HOMOLOG"/>
    <property type="match status" value="1"/>
</dbReference>
<dbReference type="Pfam" id="PF01871">
    <property type="entry name" value="AMMECR1"/>
    <property type="match status" value="1"/>
</dbReference>
<dbReference type="SUPFAM" id="SSF143447">
    <property type="entry name" value="AMMECR1-like"/>
    <property type="match status" value="1"/>
</dbReference>
<dbReference type="PROSITE" id="PS51112">
    <property type="entry name" value="AMMECR1"/>
    <property type="match status" value="1"/>
</dbReference>
<evidence type="ECO:0000255" key="1">
    <source>
        <dbReference type="HAMAP-Rule" id="MF_00645"/>
    </source>
</evidence>
<sequence length="205" mass="23570">MYRIKDEWGEFLVRLARRAVEEYVRHKRVIEPPEDTPTELWEKMGVFVTLNRHNVPPQMALRGCIGFPLPIYPLVEATIKAAIYAAVDDPRFPPVQPEELDELTVEVSVLTPPELVEGPPEGRPKKIKVGRDGLLIEKGIYSGLLLPQVPVEWGWDEEEFLAQTCWKAGLPPDCWLDPDTKVYRFTAEIFEEEYPRGPVRRKPLV</sequence>
<feature type="chain" id="PRO_0000142386" description="Protein TK0174">
    <location>
        <begin position="1"/>
        <end position="205"/>
    </location>
</feature>
<feature type="domain" description="AMMECR1" evidence="1">
    <location>
        <begin position="7"/>
        <end position="201"/>
    </location>
</feature>
<keyword id="KW-1185">Reference proteome</keyword>
<reference key="1">
    <citation type="journal article" date="2005" name="Genome Res.">
        <title>Complete genome sequence of the hyperthermophilic archaeon Thermococcus kodakaraensis KOD1 and comparison with Pyrococcus genomes.</title>
        <authorList>
            <person name="Fukui T."/>
            <person name="Atomi H."/>
            <person name="Kanai T."/>
            <person name="Matsumi R."/>
            <person name="Fujiwara S."/>
            <person name="Imanaka T."/>
        </authorList>
    </citation>
    <scope>NUCLEOTIDE SEQUENCE [LARGE SCALE GENOMIC DNA]</scope>
    <source>
        <strain>ATCC BAA-918 / JCM 12380 / KOD1</strain>
    </source>
</reference>
<organism>
    <name type="scientific">Thermococcus kodakarensis (strain ATCC BAA-918 / JCM 12380 / KOD1)</name>
    <name type="common">Pyrococcus kodakaraensis (strain KOD1)</name>
    <dbReference type="NCBI Taxonomy" id="69014"/>
    <lineage>
        <taxon>Archaea</taxon>
        <taxon>Methanobacteriati</taxon>
        <taxon>Methanobacteriota</taxon>
        <taxon>Thermococci</taxon>
        <taxon>Thermococcales</taxon>
        <taxon>Thermococcaceae</taxon>
        <taxon>Thermococcus</taxon>
    </lineage>
</organism>
<accession>Q5JFK7</accession>
<gene>
    <name type="ordered locus">TK0174</name>
</gene>
<proteinExistence type="inferred from homology"/>
<name>Y174_THEKO</name>